<reference key="1">
    <citation type="journal article" date="2005" name="Science">
        <title>Life at depth: Photobacterium profundum genome sequence and expression analysis.</title>
        <authorList>
            <person name="Vezzi A."/>
            <person name="Campanaro S."/>
            <person name="D'Angelo M."/>
            <person name="Simonato F."/>
            <person name="Vitulo N."/>
            <person name="Lauro F.M."/>
            <person name="Cestaro A."/>
            <person name="Malacrida G."/>
            <person name="Simionati B."/>
            <person name="Cannata N."/>
            <person name="Romualdi C."/>
            <person name="Bartlett D.H."/>
            <person name="Valle G."/>
        </authorList>
    </citation>
    <scope>NUCLEOTIDE SEQUENCE [LARGE SCALE GENOMIC DNA]</scope>
    <source>
        <strain>ATCC BAA-1253 / SS9</strain>
    </source>
</reference>
<comment type="function">
    <text evidence="1">Catalyzes the synthesis of GMP from XMP.</text>
</comment>
<comment type="catalytic activity">
    <reaction evidence="1">
        <text>XMP + L-glutamine + ATP + H2O = GMP + L-glutamate + AMP + diphosphate + 2 H(+)</text>
        <dbReference type="Rhea" id="RHEA:11680"/>
        <dbReference type="ChEBI" id="CHEBI:15377"/>
        <dbReference type="ChEBI" id="CHEBI:15378"/>
        <dbReference type="ChEBI" id="CHEBI:29985"/>
        <dbReference type="ChEBI" id="CHEBI:30616"/>
        <dbReference type="ChEBI" id="CHEBI:33019"/>
        <dbReference type="ChEBI" id="CHEBI:57464"/>
        <dbReference type="ChEBI" id="CHEBI:58115"/>
        <dbReference type="ChEBI" id="CHEBI:58359"/>
        <dbReference type="ChEBI" id="CHEBI:456215"/>
        <dbReference type="EC" id="6.3.5.2"/>
    </reaction>
</comment>
<comment type="pathway">
    <text evidence="1">Purine metabolism; GMP biosynthesis; GMP from XMP (L-Gln route): step 1/1.</text>
</comment>
<comment type="subunit">
    <text evidence="1">Homodimer.</text>
</comment>
<keyword id="KW-0067">ATP-binding</keyword>
<keyword id="KW-0315">Glutamine amidotransferase</keyword>
<keyword id="KW-0332">GMP biosynthesis</keyword>
<keyword id="KW-0436">Ligase</keyword>
<keyword id="KW-0547">Nucleotide-binding</keyword>
<keyword id="KW-0658">Purine biosynthesis</keyword>
<keyword id="KW-1185">Reference proteome</keyword>
<name>GUAA_PHOPR</name>
<proteinExistence type="inferred from homology"/>
<accession>Q6LU31</accession>
<sequence length="527" mass="58652">MTTSTNIHDQRILILDFGSQYTQLIARRIREIGVYCELWSWDVDEADIRDFNPNGIILSGGPESVTGDESPRAPQYVFEAGVPVFGVCYGMQTMAEQLGGKVAGSSMREFGYAQVEIVEPTSFFKNIEDAVAEDGNGLLDVWMSHGDKVVEIPSDFVKVAQTDTCPFAAIANEEKHFYGVQFHPEVTHTRQGMRIIENFVLNICGCENLWTSANIIEDAIANIKEQVGDDEVILGLSGGVDSSVVAMLLHRAIGDKLTCVFVDNGLLRLNEGEQVMDMFGDHFGLNIVHVKAEDRFLNALAGENDPEAKRKIIGHAFIDVFDEESKKLKNAKWLAQGTIYPDVIESAASKNGKAHVIKSHHNVGGLPDDMEMGLVEPLRELFKDEVRKIGLELGLPYNMLYRHPFPGPGLGVRVLGEVKKEYCDLLRRADAIFIEELHSADLYNKVSQAFTVFLPVRSVGVMGDGRKYDWVVSLRAVETIDFMTAHWAHLPYDFLGKVSNRIINEVDGISRVVYDISGKPPATIEWE</sequence>
<dbReference type="EC" id="6.3.5.2" evidence="1"/>
<dbReference type="EMBL" id="CR378665">
    <property type="protein sequence ID" value="CAG19194.1"/>
    <property type="molecule type" value="Genomic_DNA"/>
</dbReference>
<dbReference type="RefSeq" id="WP_011217536.1">
    <property type="nucleotide sequence ID" value="NC_006370.1"/>
</dbReference>
<dbReference type="SMR" id="Q6LU31"/>
<dbReference type="STRING" id="298386.PBPRA0781"/>
<dbReference type="MEROPS" id="C26.A07"/>
<dbReference type="KEGG" id="ppr:PBPRA0781"/>
<dbReference type="eggNOG" id="COG0518">
    <property type="taxonomic scope" value="Bacteria"/>
</dbReference>
<dbReference type="eggNOG" id="COG0519">
    <property type="taxonomic scope" value="Bacteria"/>
</dbReference>
<dbReference type="HOGENOM" id="CLU_014340_0_5_6"/>
<dbReference type="UniPathway" id="UPA00189">
    <property type="reaction ID" value="UER00296"/>
</dbReference>
<dbReference type="Proteomes" id="UP000000593">
    <property type="component" value="Chromosome 1"/>
</dbReference>
<dbReference type="GO" id="GO:0005829">
    <property type="term" value="C:cytosol"/>
    <property type="evidence" value="ECO:0007669"/>
    <property type="project" value="TreeGrafter"/>
</dbReference>
<dbReference type="GO" id="GO:0005524">
    <property type="term" value="F:ATP binding"/>
    <property type="evidence" value="ECO:0007669"/>
    <property type="project" value="UniProtKB-UniRule"/>
</dbReference>
<dbReference type="GO" id="GO:0003921">
    <property type="term" value="F:GMP synthase activity"/>
    <property type="evidence" value="ECO:0007669"/>
    <property type="project" value="InterPro"/>
</dbReference>
<dbReference type="CDD" id="cd01742">
    <property type="entry name" value="GATase1_GMP_Synthase"/>
    <property type="match status" value="1"/>
</dbReference>
<dbReference type="CDD" id="cd01997">
    <property type="entry name" value="GMP_synthase_C"/>
    <property type="match status" value="1"/>
</dbReference>
<dbReference type="FunFam" id="3.30.300.10:FF:000002">
    <property type="entry name" value="GMP synthase [glutamine-hydrolyzing]"/>
    <property type="match status" value="1"/>
</dbReference>
<dbReference type="FunFam" id="3.40.50.620:FF:000001">
    <property type="entry name" value="GMP synthase [glutamine-hydrolyzing]"/>
    <property type="match status" value="1"/>
</dbReference>
<dbReference type="FunFam" id="3.40.50.880:FF:000001">
    <property type="entry name" value="GMP synthase [glutamine-hydrolyzing]"/>
    <property type="match status" value="1"/>
</dbReference>
<dbReference type="Gene3D" id="3.30.300.10">
    <property type="match status" value="1"/>
</dbReference>
<dbReference type="Gene3D" id="3.40.50.880">
    <property type="match status" value="1"/>
</dbReference>
<dbReference type="Gene3D" id="3.40.50.620">
    <property type="entry name" value="HUPs"/>
    <property type="match status" value="1"/>
</dbReference>
<dbReference type="HAMAP" id="MF_00344">
    <property type="entry name" value="GMP_synthase"/>
    <property type="match status" value="1"/>
</dbReference>
<dbReference type="InterPro" id="IPR029062">
    <property type="entry name" value="Class_I_gatase-like"/>
</dbReference>
<dbReference type="InterPro" id="IPR017926">
    <property type="entry name" value="GATASE"/>
</dbReference>
<dbReference type="InterPro" id="IPR001674">
    <property type="entry name" value="GMP_synth_C"/>
</dbReference>
<dbReference type="InterPro" id="IPR004739">
    <property type="entry name" value="GMP_synth_GATase"/>
</dbReference>
<dbReference type="InterPro" id="IPR022955">
    <property type="entry name" value="GMP_synthase"/>
</dbReference>
<dbReference type="InterPro" id="IPR025777">
    <property type="entry name" value="GMPS_ATP_PPase_dom"/>
</dbReference>
<dbReference type="InterPro" id="IPR022310">
    <property type="entry name" value="NAD/GMP_synthase"/>
</dbReference>
<dbReference type="InterPro" id="IPR014729">
    <property type="entry name" value="Rossmann-like_a/b/a_fold"/>
</dbReference>
<dbReference type="NCBIfam" id="TIGR00884">
    <property type="entry name" value="guaA_Cterm"/>
    <property type="match status" value="1"/>
</dbReference>
<dbReference type="NCBIfam" id="TIGR00888">
    <property type="entry name" value="guaA_Nterm"/>
    <property type="match status" value="1"/>
</dbReference>
<dbReference type="NCBIfam" id="NF000848">
    <property type="entry name" value="PRK00074.1"/>
    <property type="match status" value="1"/>
</dbReference>
<dbReference type="PANTHER" id="PTHR11922:SF2">
    <property type="entry name" value="GMP SYNTHASE [GLUTAMINE-HYDROLYZING]"/>
    <property type="match status" value="1"/>
</dbReference>
<dbReference type="PANTHER" id="PTHR11922">
    <property type="entry name" value="GMP SYNTHASE-RELATED"/>
    <property type="match status" value="1"/>
</dbReference>
<dbReference type="Pfam" id="PF00117">
    <property type="entry name" value="GATase"/>
    <property type="match status" value="1"/>
</dbReference>
<dbReference type="Pfam" id="PF00958">
    <property type="entry name" value="GMP_synt_C"/>
    <property type="match status" value="1"/>
</dbReference>
<dbReference type="Pfam" id="PF02540">
    <property type="entry name" value="NAD_synthase"/>
    <property type="match status" value="1"/>
</dbReference>
<dbReference type="PRINTS" id="PR00097">
    <property type="entry name" value="ANTSNTHASEII"/>
</dbReference>
<dbReference type="PRINTS" id="PR00099">
    <property type="entry name" value="CPSGATASE"/>
</dbReference>
<dbReference type="PRINTS" id="PR00096">
    <property type="entry name" value="GATASE"/>
</dbReference>
<dbReference type="SUPFAM" id="SSF52402">
    <property type="entry name" value="Adenine nucleotide alpha hydrolases-like"/>
    <property type="match status" value="1"/>
</dbReference>
<dbReference type="SUPFAM" id="SSF52317">
    <property type="entry name" value="Class I glutamine amidotransferase-like"/>
    <property type="match status" value="1"/>
</dbReference>
<dbReference type="SUPFAM" id="SSF54810">
    <property type="entry name" value="GMP synthetase C-terminal dimerisation domain"/>
    <property type="match status" value="1"/>
</dbReference>
<dbReference type="PROSITE" id="PS51273">
    <property type="entry name" value="GATASE_TYPE_1"/>
    <property type="match status" value="1"/>
</dbReference>
<dbReference type="PROSITE" id="PS51553">
    <property type="entry name" value="GMPS_ATP_PPASE"/>
    <property type="match status" value="1"/>
</dbReference>
<protein>
    <recommendedName>
        <fullName evidence="1">GMP synthase [glutamine-hydrolyzing]</fullName>
        <ecNumber evidence="1">6.3.5.2</ecNumber>
    </recommendedName>
    <alternativeName>
        <fullName evidence="1">GMP synthetase</fullName>
    </alternativeName>
    <alternativeName>
        <fullName evidence="1">Glutamine amidotransferase</fullName>
    </alternativeName>
</protein>
<evidence type="ECO:0000255" key="1">
    <source>
        <dbReference type="HAMAP-Rule" id="MF_00344"/>
    </source>
</evidence>
<gene>
    <name evidence="1" type="primary">guaA</name>
    <name type="ordered locus">PBPRA0781</name>
</gene>
<organism>
    <name type="scientific">Photobacterium profundum (strain SS9)</name>
    <dbReference type="NCBI Taxonomy" id="298386"/>
    <lineage>
        <taxon>Bacteria</taxon>
        <taxon>Pseudomonadati</taxon>
        <taxon>Pseudomonadota</taxon>
        <taxon>Gammaproteobacteria</taxon>
        <taxon>Vibrionales</taxon>
        <taxon>Vibrionaceae</taxon>
        <taxon>Photobacterium</taxon>
    </lineage>
</organism>
<feature type="chain" id="PRO_0000140157" description="GMP synthase [glutamine-hydrolyzing]">
    <location>
        <begin position="1"/>
        <end position="527"/>
    </location>
</feature>
<feature type="domain" description="Glutamine amidotransferase type-1" evidence="1">
    <location>
        <begin position="11"/>
        <end position="209"/>
    </location>
</feature>
<feature type="domain" description="GMPS ATP-PPase" evidence="1">
    <location>
        <begin position="210"/>
        <end position="402"/>
    </location>
</feature>
<feature type="active site" description="Nucleophile" evidence="1">
    <location>
        <position position="88"/>
    </location>
</feature>
<feature type="active site" evidence="1">
    <location>
        <position position="183"/>
    </location>
</feature>
<feature type="active site" evidence="1">
    <location>
        <position position="185"/>
    </location>
</feature>
<feature type="binding site" evidence="1">
    <location>
        <begin position="237"/>
        <end position="243"/>
    </location>
    <ligand>
        <name>ATP</name>
        <dbReference type="ChEBI" id="CHEBI:30616"/>
    </ligand>
</feature>